<keyword id="KW-1185">Reference proteome</keyword>
<protein>
    <recommendedName>
        <fullName>Uncharacterized protein TP_0539</fullName>
    </recommendedName>
</protein>
<accession>O83550</accession>
<reference key="1">
    <citation type="journal article" date="1998" name="Science">
        <title>Complete genome sequence of Treponema pallidum, the syphilis spirochete.</title>
        <authorList>
            <person name="Fraser C.M."/>
            <person name="Norris S.J."/>
            <person name="Weinstock G.M."/>
            <person name="White O."/>
            <person name="Sutton G.G."/>
            <person name="Dodson R.J."/>
            <person name="Gwinn M.L."/>
            <person name="Hickey E.K."/>
            <person name="Clayton R.A."/>
            <person name="Ketchum K.A."/>
            <person name="Sodergren E."/>
            <person name="Hardham J.M."/>
            <person name="McLeod M.P."/>
            <person name="Salzberg S.L."/>
            <person name="Peterson J.D."/>
            <person name="Khalak H.G."/>
            <person name="Richardson D.L."/>
            <person name="Howell J.K."/>
            <person name="Chidambaram M."/>
            <person name="Utterback T.R."/>
            <person name="McDonald L.A."/>
            <person name="Artiach P."/>
            <person name="Bowman C."/>
            <person name="Cotton M.D."/>
            <person name="Fujii C."/>
            <person name="Garland S.A."/>
            <person name="Hatch B."/>
            <person name="Horst K."/>
            <person name="Roberts K.M."/>
            <person name="Sandusky M."/>
            <person name="Weidman J.F."/>
            <person name="Smith H.O."/>
            <person name="Venter J.C."/>
        </authorList>
    </citation>
    <scope>NUCLEOTIDE SEQUENCE [LARGE SCALE GENOMIC DNA]</scope>
    <source>
        <strain>Nichols</strain>
    </source>
</reference>
<gene>
    <name type="ordered locus">TP_0539</name>
</gene>
<dbReference type="EMBL" id="AE000520">
    <property type="protein sequence ID" value="AAC65530.1"/>
    <property type="molecule type" value="Genomic_DNA"/>
</dbReference>
<dbReference type="PIR" id="H71311">
    <property type="entry name" value="H71311"/>
</dbReference>
<dbReference type="RefSeq" id="WP_010881986.1">
    <property type="nucleotide sequence ID" value="NC_021490.2"/>
</dbReference>
<dbReference type="IntAct" id="O83550">
    <property type="interactions" value="5"/>
</dbReference>
<dbReference type="STRING" id="243276.TP_0539"/>
<dbReference type="EnsemblBacteria" id="AAC65530">
    <property type="protein sequence ID" value="AAC65530"/>
    <property type="gene ID" value="TP_0539"/>
</dbReference>
<dbReference type="KEGG" id="tpa:TP_0539"/>
<dbReference type="KEGG" id="tpw:TPANIC_0539"/>
<dbReference type="HOGENOM" id="CLU_2703746_0_0_12"/>
<dbReference type="Proteomes" id="UP000000811">
    <property type="component" value="Chromosome"/>
</dbReference>
<organism>
    <name type="scientific">Treponema pallidum (strain Nichols)</name>
    <dbReference type="NCBI Taxonomy" id="243276"/>
    <lineage>
        <taxon>Bacteria</taxon>
        <taxon>Pseudomonadati</taxon>
        <taxon>Spirochaetota</taxon>
        <taxon>Spirochaetia</taxon>
        <taxon>Spirochaetales</taxon>
        <taxon>Treponemataceae</taxon>
        <taxon>Treponema</taxon>
    </lineage>
</organism>
<name>Y539_TREPA</name>
<sequence>MTSLQVLSIISSFLTQGLPHPPHVAADSHYISKKDSISASVGRLTSLLPCLCALHAYGVGHRPFVIVDIFYAE</sequence>
<proteinExistence type="predicted"/>
<feature type="chain" id="PRO_0000202272" description="Uncharacterized protein TP_0539">
    <location>
        <begin position="1"/>
        <end position="73"/>
    </location>
</feature>